<name>NANR_SALTI</name>
<evidence type="ECO:0000255" key="1">
    <source>
        <dbReference type="HAMAP-Rule" id="MF_01236"/>
    </source>
</evidence>
<evidence type="ECO:0000256" key="2">
    <source>
        <dbReference type="SAM" id="MobiDB-lite"/>
    </source>
</evidence>
<dbReference type="EMBL" id="AL513382">
    <property type="protein sequence ID" value="CAD07857.1"/>
    <property type="molecule type" value="Genomic_DNA"/>
</dbReference>
<dbReference type="EMBL" id="AE014613">
    <property type="protein sequence ID" value="AAO70792.1"/>
    <property type="molecule type" value="Genomic_DNA"/>
</dbReference>
<dbReference type="RefSeq" id="NP_457718.1">
    <property type="nucleotide sequence ID" value="NC_003198.1"/>
</dbReference>
<dbReference type="RefSeq" id="WP_000382926.1">
    <property type="nucleotide sequence ID" value="NZ_WSUR01000003.1"/>
</dbReference>
<dbReference type="SMR" id="P67736"/>
<dbReference type="STRING" id="220341.gene:17587370"/>
<dbReference type="KEGG" id="stt:t3257"/>
<dbReference type="KEGG" id="sty:STY3521"/>
<dbReference type="PATRIC" id="fig|220341.7.peg.3584"/>
<dbReference type="eggNOG" id="COG2186">
    <property type="taxonomic scope" value="Bacteria"/>
</dbReference>
<dbReference type="HOGENOM" id="CLU_017584_9_1_6"/>
<dbReference type="OMA" id="QMVSNPI"/>
<dbReference type="OrthoDB" id="7005926at2"/>
<dbReference type="Proteomes" id="UP000000541">
    <property type="component" value="Chromosome"/>
</dbReference>
<dbReference type="Proteomes" id="UP000002670">
    <property type="component" value="Chromosome"/>
</dbReference>
<dbReference type="GO" id="GO:0003677">
    <property type="term" value="F:DNA binding"/>
    <property type="evidence" value="ECO:0007669"/>
    <property type="project" value="UniProtKB-KW"/>
</dbReference>
<dbReference type="GO" id="GO:0003700">
    <property type="term" value="F:DNA-binding transcription factor activity"/>
    <property type="evidence" value="ECO:0007669"/>
    <property type="project" value="UniProtKB-UniRule"/>
</dbReference>
<dbReference type="GO" id="GO:0045892">
    <property type="term" value="P:negative regulation of DNA-templated transcription"/>
    <property type="evidence" value="ECO:0007669"/>
    <property type="project" value="UniProtKB-UniRule"/>
</dbReference>
<dbReference type="CDD" id="cd07377">
    <property type="entry name" value="WHTH_GntR"/>
    <property type="match status" value="1"/>
</dbReference>
<dbReference type="FunFam" id="1.10.10.10:FF:000150">
    <property type="entry name" value="HTH-type transcriptional repressor NanR"/>
    <property type="match status" value="1"/>
</dbReference>
<dbReference type="Gene3D" id="1.20.120.530">
    <property type="entry name" value="GntR ligand-binding domain-like"/>
    <property type="match status" value="1"/>
</dbReference>
<dbReference type="Gene3D" id="1.10.10.10">
    <property type="entry name" value="Winged helix-like DNA-binding domain superfamily/Winged helix DNA-binding domain"/>
    <property type="match status" value="1"/>
</dbReference>
<dbReference type="HAMAP" id="MF_01236">
    <property type="entry name" value="HTH_NanR"/>
    <property type="match status" value="1"/>
</dbReference>
<dbReference type="InterPro" id="IPR011711">
    <property type="entry name" value="GntR_C"/>
</dbReference>
<dbReference type="InterPro" id="IPR008920">
    <property type="entry name" value="TF_FadR/GntR_C"/>
</dbReference>
<dbReference type="InterPro" id="IPR000524">
    <property type="entry name" value="Tscrpt_reg_HTH_GntR"/>
</dbReference>
<dbReference type="InterPro" id="IPR023730">
    <property type="entry name" value="Tscrpt_reg_NanR"/>
</dbReference>
<dbReference type="InterPro" id="IPR036388">
    <property type="entry name" value="WH-like_DNA-bd_sf"/>
</dbReference>
<dbReference type="InterPro" id="IPR036390">
    <property type="entry name" value="WH_DNA-bd_sf"/>
</dbReference>
<dbReference type="NCBIfam" id="NF003011">
    <property type="entry name" value="PRK03837.1"/>
    <property type="match status" value="1"/>
</dbReference>
<dbReference type="PANTHER" id="PTHR43537:SF53">
    <property type="entry name" value="HTH-TYPE TRANSCRIPTIONAL REPRESSOR NANR"/>
    <property type="match status" value="1"/>
</dbReference>
<dbReference type="PANTHER" id="PTHR43537">
    <property type="entry name" value="TRANSCRIPTIONAL REGULATOR, GNTR FAMILY"/>
    <property type="match status" value="1"/>
</dbReference>
<dbReference type="Pfam" id="PF07729">
    <property type="entry name" value="FCD"/>
    <property type="match status" value="1"/>
</dbReference>
<dbReference type="Pfam" id="PF00392">
    <property type="entry name" value="GntR"/>
    <property type="match status" value="1"/>
</dbReference>
<dbReference type="PRINTS" id="PR00035">
    <property type="entry name" value="HTHGNTR"/>
</dbReference>
<dbReference type="SMART" id="SM00895">
    <property type="entry name" value="FCD"/>
    <property type="match status" value="1"/>
</dbReference>
<dbReference type="SMART" id="SM00345">
    <property type="entry name" value="HTH_GNTR"/>
    <property type="match status" value="1"/>
</dbReference>
<dbReference type="SUPFAM" id="SSF48008">
    <property type="entry name" value="GntR ligand-binding domain-like"/>
    <property type="match status" value="1"/>
</dbReference>
<dbReference type="SUPFAM" id="SSF46785">
    <property type="entry name" value="Winged helix' DNA-binding domain"/>
    <property type="match status" value="1"/>
</dbReference>
<dbReference type="PROSITE" id="PS50949">
    <property type="entry name" value="HTH_GNTR"/>
    <property type="match status" value="1"/>
</dbReference>
<protein>
    <recommendedName>
        <fullName evidence="1">HTH-type transcriptional repressor NanR</fullName>
    </recommendedName>
</protein>
<proteinExistence type="inferred from homology"/>
<accession>P67736</accession>
<accession>Q8XFH8</accession>
<organism>
    <name type="scientific">Salmonella typhi</name>
    <dbReference type="NCBI Taxonomy" id="90370"/>
    <lineage>
        <taxon>Bacteria</taxon>
        <taxon>Pseudomonadati</taxon>
        <taxon>Pseudomonadota</taxon>
        <taxon>Gammaproteobacteria</taxon>
        <taxon>Enterobacterales</taxon>
        <taxon>Enterobacteriaceae</taxon>
        <taxon>Salmonella</taxon>
    </lineage>
</organism>
<keyword id="KW-0238">DNA-binding</keyword>
<keyword id="KW-0678">Repressor</keyword>
<keyword id="KW-0804">Transcription</keyword>
<keyword id="KW-0805">Transcription regulation</keyword>
<comment type="function">
    <text evidence="1">Transcriptional repressor that controls expression of the genes required for the catabolism of sialic acids.</text>
</comment>
<comment type="similarity">
    <text evidence="1">Belongs to the NanR family.</text>
</comment>
<gene>
    <name evidence="1" type="primary">nanR</name>
    <name type="ordered locus">STY3521</name>
    <name type="ordered locus">t3257</name>
</gene>
<sequence>MDVMNAFDSQAEDSPTSLGRSLRRRPLARKKLSEMVEEELEQMIRRHEFGEGEQLPSERELMAFFNVGRPSVREALAALKRKGLVQINNGERARVSRPSADTIISELSGMAKDFLTHPGGIAHFEQLRLFFESSLVRYAAEHATDEQIALLTKALEINSQSLDDNALFIRSDVEFHRVLAEIPGNPIFMAIHVALLDWLIAARPSVPDRELHEHNNVSYQQHIVIVDAIRQRDPDKADRALQTHLNSVSATWHALGKKSQKMR</sequence>
<reference key="1">
    <citation type="journal article" date="2001" name="Nature">
        <title>Complete genome sequence of a multiple drug resistant Salmonella enterica serovar Typhi CT18.</title>
        <authorList>
            <person name="Parkhill J."/>
            <person name="Dougan G."/>
            <person name="James K.D."/>
            <person name="Thomson N.R."/>
            <person name="Pickard D."/>
            <person name="Wain J."/>
            <person name="Churcher C.M."/>
            <person name="Mungall K.L."/>
            <person name="Bentley S.D."/>
            <person name="Holden M.T.G."/>
            <person name="Sebaihia M."/>
            <person name="Baker S."/>
            <person name="Basham D."/>
            <person name="Brooks K."/>
            <person name="Chillingworth T."/>
            <person name="Connerton P."/>
            <person name="Cronin A."/>
            <person name="Davis P."/>
            <person name="Davies R.M."/>
            <person name="Dowd L."/>
            <person name="White N."/>
            <person name="Farrar J."/>
            <person name="Feltwell T."/>
            <person name="Hamlin N."/>
            <person name="Haque A."/>
            <person name="Hien T.T."/>
            <person name="Holroyd S."/>
            <person name="Jagels K."/>
            <person name="Krogh A."/>
            <person name="Larsen T.S."/>
            <person name="Leather S."/>
            <person name="Moule S."/>
            <person name="O'Gaora P."/>
            <person name="Parry C."/>
            <person name="Quail M.A."/>
            <person name="Rutherford K.M."/>
            <person name="Simmonds M."/>
            <person name="Skelton J."/>
            <person name="Stevens K."/>
            <person name="Whitehead S."/>
            <person name="Barrell B.G."/>
        </authorList>
    </citation>
    <scope>NUCLEOTIDE SEQUENCE [LARGE SCALE GENOMIC DNA]</scope>
    <source>
        <strain>CT18</strain>
    </source>
</reference>
<reference key="2">
    <citation type="journal article" date="2003" name="J. Bacteriol.">
        <title>Comparative genomics of Salmonella enterica serovar Typhi strains Ty2 and CT18.</title>
        <authorList>
            <person name="Deng W."/>
            <person name="Liou S.-R."/>
            <person name="Plunkett G. III"/>
            <person name="Mayhew G.F."/>
            <person name="Rose D.J."/>
            <person name="Burland V."/>
            <person name="Kodoyianni V."/>
            <person name="Schwartz D.C."/>
            <person name="Blattner F.R."/>
        </authorList>
    </citation>
    <scope>NUCLEOTIDE SEQUENCE [LARGE SCALE GENOMIC DNA]</scope>
    <source>
        <strain>ATCC 700931 / Ty2</strain>
    </source>
</reference>
<feature type="chain" id="PRO_0000050658" description="HTH-type transcriptional repressor NanR">
    <location>
        <begin position="1"/>
        <end position="263"/>
    </location>
</feature>
<feature type="domain" description="HTH gntR-type" evidence="1">
    <location>
        <begin position="30"/>
        <end position="98"/>
    </location>
</feature>
<feature type="DNA-binding region" description="H-T-H motif" evidence="1">
    <location>
        <begin position="58"/>
        <end position="77"/>
    </location>
</feature>
<feature type="region of interest" description="Disordered" evidence="2">
    <location>
        <begin position="1"/>
        <end position="25"/>
    </location>
</feature>